<gene>
    <name evidence="1" type="primary">ilvC</name>
    <name type="ordered locus">PP_4678</name>
</gene>
<evidence type="ECO:0000255" key="1">
    <source>
        <dbReference type="HAMAP-Rule" id="MF_00435"/>
    </source>
</evidence>
<evidence type="ECO:0000255" key="2">
    <source>
        <dbReference type="PROSITE-ProRule" id="PRU01197"/>
    </source>
</evidence>
<evidence type="ECO:0000255" key="3">
    <source>
        <dbReference type="PROSITE-ProRule" id="PRU01198"/>
    </source>
</evidence>
<name>ILVC_PSEPK</name>
<sequence length="338" mass="36370">MKVFYDKDCDLSIIQGKKVAIIGYGSQGHAQACNLKDSGVDVTVGLRKGSATVAKAEAHGLKVADVATAVAAADLVMILTPDEFQGALYKNEIEPNIKKGATLAFSHGFSIHYNQVVPRADLDVIMIAPKAPGHTVRSEFVKGGGIPDLIAIYQDASGNAKNVALSYASGVGGGRTGIIETTFKDETETDLFGEQAVLCGGTVELVKAGFETLVEAGYAPEMAYFECLHELKLIVDLMYEGGIANMNYSISNNAEYGEYVTGPEVINEESRKAMRNALKRIQDGEYAKMFISEGATNYPSMTAKRRNNAAHGIEIIGEQLRSMMPWISANKIVDKTKN</sequence>
<comment type="function">
    <text evidence="1">Involved in the biosynthesis of branched-chain amino acids (BCAA). Catalyzes an alkyl-migration followed by a ketol-acid reduction of (S)-2-acetolactate (S2AL) to yield (R)-2,3-dihydroxy-isovalerate. In the isomerase reaction, S2AL is rearranged via a Mg-dependent methyl migration to produce 3-hydroxy-3-methyl-2-ketobutyrate (HMKB). In the reductase reaction, this 2-ketoacid undergoes a metal-dependent reduction by NADPH to yield (R)-2,3-dihydroxy-isovalerate.</text>
</comment>
<comment type="catalytic activity">
    <reaction evidence="1">
        <text>(2R)-2,3-dihydroxy-3-methylbutanoate + NADP(+) = (2S)-2-acetolactate + NADPH + H(+)</text>
        <dbReference type="Rhea" id="RHEA:22068"/>
        <dbReference type="ChEBI" id="CHEBI:15378"/>
        <dbReference type="ChEBI" id="CHEBI:49072"/>
        <dbReference type="ChEBI" id="CHEBI:57783"/>
        <dbReference type="ChEBI" id="CHEBI:58349"/>
        <dbReference type="ChEBI" id="CHEBI:58476"/>
        <dbReference type="EC" id="1.1.1.86"/>
    </reaction>
</comment>
<comment type="catalytic activity">
    <reaction evidence="1">
        <text>(2R,3R)-2,3-dihydroxy-3-methylpentanoate + NADP(+) = (S)-2-ethyl-2-hydroxy-3-oxobutanoate + NADPH + H(+)</text>
        <dbReference type="Rhea" id="RHEA:13493"/>
        <dbReference type="ChEBI" id="CHEBI:15378"/>
        <dbReference type="ChEBI" id="CHEBI:49256"/>
        <dbReference type="ChEBI" id="CHEBI:49258"/>
        <dbReference type="ChEBI" id="CHEBI:57783"/>
        <dbReference type="ChEBI" id="CHEBI:58349"/>
        <dbReference type="EC" id="1.1.1.86"/>
    </reaction>
</comment>
<comment type="cofactor">
    <cofactor evidence="1">
        <name>Mg(2+)</name>
        <dbReference type="ChEBI" id="CHEBI:18420"/>
    </cofactor>
    <text evidence="1">Binds 2 magnesium ions per subunit.</text>
</comment>
<comment type="pathway">
    <text evidence="1">Amino-acid biosynthesis; L-isoleucine biosynthesis; L-isoleucine from 2-oxobutanoate: step 2/4.</text>
</comment>
<comment type="pathway">
    <text evidence="1">Amino-acid biosynthesis; L-valine biosynthesis; L-valine from pyruvate: step 2/4.</text>
</comment>
<comment type="similarity">
    <text evidence="1">Belongs to the ketol-acid reductoisomerase family.</text>
</comment>
<keyword id="KW-0028">Amino-acid biosynthesis</keyword>
<keyword id="KW-0100">Branched-chain amino acid biosynthesis</keyword>
<keyword id="KW-0460">Magnesium</keyword>
<keyword id="KW-0479">Metal-binding</keyword>
<keyword id="KW-0521">NADP</keyword>
<keyword id="KW-0560">Oxidoreductase</keyword>
<keyword id="KW-1185">Reference proteome</keyword>
<proteinExistence type="inferred from homology"/>
<reference key="1">
    <citation type="journal article" date="2002" name="Environ. Microbiol.">
        <title>Complete genome sequence and comparative analysis of the metabolically versatile Pseudomonas putida KT2440.</title>
        <authorList>
            <person name="Nelson K.E."/>
            <person name="Weinel C."/>
            <person name="Paulsen I.T."/>
            <person name="Dodson R.J."/>
            <person name="Hilbert H."/>
            <person name="Martins dos Santos V.A.P."/>
            <person name="Fouts D.E."/>
            <person name="Gill S.R."/>
            <person name="Pop M."/>
            <person name="Holmes M."/>
            <person name="Brinkac L.M."/>
            <person name="Beanan M.J."/>
            <person name="DeBoy R.T."/>
            <person name="Daugherty S.C."/>
            <person name="Kolonay J.F."/>
            <person name="Madupu R."/>
            <person name="Nelson W.C."/>
            <person name="White O."/>
            <person name="Peterson J.D."/>
            <person name="Khouri H.M."/>
            <person name="Hance I."/>
            <person name="Chris Lee P."/>
            <person name="Holtzapple E.K."/>
            <person name="Scanlan D."/>
            <person name="Tran K."/>
            <person name="Moazzez A."/>
            <person name="Utterback T.R."/>
            <person name="Rizzo M."/>
            <person name="Lee K."/>
            <person name="Kosack D."/>
            <person name="Moestl D."/>
            <person name="Wedler H."/>
            <person name="Lauber J."/>
            <person name="Stjepandic D."/>
            <person name="Hoheisel J."/>
            <person name="Straetz M."/>
            <person name="Heim S."/>
            <person name="Kiewitz C."/>
            <person name="Eisen J.A."/>
            <person name="Timmis K.N."/>
            <person name="Duesterhoeft A."/>
            <person name="Tuemmler B."/>
            <person name="Fraser C.M."/>
        </authorList>
    </citation>
    <scope>NUCLEOTIDE SEQUENCE [LARGE SCALE GENOMIC DNA]</scope>
    <source>
        <strain>ATCC 47054 / DSM 6125 / CFBP 8728 / NCIMB 11950 / KT2440</strain>
    </source>
</reference>
<feature type="chain" id="PRO_0000151343" description="Ketol-acid reductoisomerase (NADP(+))">
    <location>
        <begin position="1"/>
        <end position="338"/>
    </location>
</feature>
<feature type="domain" description="KARI N-terminal Rossmann" evidence="2">
    <location>
        <begin position="1"/>
        <end position="181"/>
    </location>
</feature>
<feature type="domain" description="KARI C-terminal knotted" evidence="3">
    <location>
        <begin position="182"/>
        <end position="327"/>
    </location>
</feature>
<feature type="active site" evidence="1">
    <location>
        <position position="107"/>
    </location>
</feature>
<feature type="binding site" evidence="1">
    <location>
        <begin position="24"/>
        <end position="27"/>
    </location>
    <ligand>
        <name>NADP(+)</name>
        <dbReference type="ChEBI" id="CHEBI:58349"/>
    </ligand>
</feature>
<feature type="binding site" evidence="1">
    <location>
        <position position="47"/>
    </location>
    <ligand>
        <name>NADP(+)</name>
        <dbReference type="ChEBI" id="CHEBI:58349"/>
    </ligand>
</feature>
<feature type="binding site" evidence="1">
    <location>
        <position position="50"/>
    </location>
    <ligand>
        <name>NADP(+)</name>
        <dbReference type="ChEBI" id="CHEBI:58349"/>
    </ligand>
</feature>
<feature type="binding site" evidence="1">
    <location>
        <position position="52"/>
    </location>
    <ligand>
        <name>NADP(+)</name>
        <dbReference type="ChEBI" id="CHEBI:58349"/>
    </ligand>
</feature>
<feature type="binding site" evidence="1">
    <location>
        <begin position="82"/>
        <end position="85"/>
    </location>
    <ligand>
        <name>NADP(+)</name>
        <dbReference type="ChEBI" id="CHEBI:58349"/>
    </ligand>
</feature>
<feature type="binding site" evidence="1">
    <location>
        <position position="133"/>
    </location>
    <ligand>
        <name>NADP(+)</name>
        <dbReference type="ChEBI" id="CHEBI:58349"/>
    </ligand>
</feature>
<feature type="binding site" evidence="1">
    <location>
        <position position="190"/>
    </location>
    <ligand>
        <name>Mg(2+)</name>
        <dbReference type="ChEBI" id="CHEBI:18420"/>
        <label>1</label>
    </ligand>
</feature>
<feature type="binding site" evidence="1">
    <location>
        <position position="190"/>
    </location>
    <ligand>
        <name>Mg(2+)</name>
        <dbReference type="ChEBI" id="CHEBI:18420"/>
        <label>2</label>
    </ligand>
</feature>
<feature type="binding site" evidence="1">
    <location>
        <position position="194"/>
    </location>
    <ligand>
        <name>Mg(2+)</name>
        <dbReference type="ChEBI" id="CHEBI:18420"/>
        <label>1</label>
    </ligand>
</feature>
<feature type="binding site" evidence="1">
    <location>
        <position position="226"/>
    </location>
    <ligand>
        <name>Mg(2+)</name>
        <dbReference type="ChEBI" id="CHEBI:18420"/>
        <label>2</label>
    </ligand>
</feature>
<feature type="binding site" evidence="1">
    <location>
        <position position="230"/>
    </location>
    <ligand>
        <name>Mg(2+)</name>
        <dbReference type="ChEBI" id="CHEBI:18420"/>
        <label>2</label>
    </ligand>
</feature>
<feature type="binding site" evidence="1">
    <location>
        <position position="251"/>
    </location>
    <ligand>
        <name>substrate</name>
    </ligand>
</feature>
<dbReference type="EC" id="1.1.1.86" evidence="1"/>
<dbReference type="EMBL" id="AE015451">
    <property type="protein sequence ID" value="AAN70251.1"/>
    <property type="molecule type" value="Genomic_DNA"/>
</dbReference>
<dbReference type="RefSeq" id="NP_746787.1">
    <property type="nucleotide sequence ID" value="NC_002947.4"/>
</dbReference>
<dbReference type="RefSeq" id="WP_003250043.1">
    <property type="nucleotide sequence ID" value="NZ_CP169744.1"/>
</dbReference>
<dbReference type="SMR" id="Q88DZ0"/>
<dbReference type="STRING" id="160488.PP_4678"/>
<dbReference type="PaxDb" id="160488-PP_4678"/>
<dbReference type="GeneID" id="83682391"/>
<dbReference type="KEGG" id="ppu:PP_4678"/>
<dbReference type="PATRIC" id="fig|160488.4.peg.4986"/>
<dbReference type="eggNOG" id="COG0059">
    <property type="taxonomic scope" value="Bacteria"/>
</dbReference>
<dbReference type="HOGENOM" id="CLU_033821_0_1_6"/>
<dbReference type="OrthoDB" id="9804088at2"/>
<dbReference type="PhylomeDB" id="Q88DZ0"/>
<dbReference type="BioCyc" id="PPUT160488:G1G01-4996-MONOMER"/>
<dbReference type="UniPathway" id="UPA00047">
    <property type="reaction ID" value="UER00056"/>
</dbReference>
<dbReference type="UniPathway" id="UPA00049">
    <property type="reaction ID" value="UER00060"/>
</dbReference>
<dbReference type="Proteomes" id="UP000000556">
    <property type="component" value="Chromosome"/>
</dbReference>
<dbReference type="GO" id="GO:0005829">
    <property type="term" value="C:cytosol"/>
    <property type="evidence" value="ECO:0007669"/>
    <property type="project" value="TreeGrafter"/>
</dbReference>
<dbReference type="GO" id="GO:0004455">
    <property type="term" value="F:ketol-acid reductoisomerase activity"/>
    <property type="evidence" value="ECO:0007669"/>
    <property type="project" value="UniProtKB-UniRule"/>
</dbReference>
<dbReference type="GO" id="GO:0000287">
    <property type="term" value="F:magnesium ion binding"/>
    <property type="evidence" value="ECO:0007669"/>
    <property type="project" value="UniProtKB-UniRule"/>
</dbReference>
<dbReference type="GO" id="GO:0050661">
    <property type="term" value="F:NADP binding"/>
    <property type="evidence" value="ECO:0007669"/>
    <property type="project" value="InterPro"/>
</dbReference>
<dbReference type="GO" id="GO:0009097">
    <property type="term" value="P:isoleucine biosynthetic process"/>
    <property type="evidence" value="ECO:0007669"/>
    <property type="project" value="UniProtKB-UniRule"/>
</dbReference>
<dbReference type="GO" id="GO:0009099">
    <property type="term" value="P:L-valine biosynthetic process"/>
    <property type="evidence" value="ECO:0007669"/>
    <property type="project" value="UniProtKB-UniRule"/>
</dbReference>
<dbReference type="FunFam" id="3.40.50.720:FF:000023">
    <property type="entry name" value="Ketol-acid reductoisomerase (NADP(+))"/>
    <property type="match status" value="1"/>
</dbReference>
<dbReference type="Gene3D" id="6.10.240.10">
    <property type="match status" value="1"/>
</dbReference>
<dbReference type="Gene3D" id="3.40.50.720">
    <property type="entry name" value="NAD(P)-binding Rossmann-like Domain"/>
    <property type="match status" value="1"/>
</dbReference>
<dbReference type="HAMAP" id="MF_00435">
    <property type="entry name" value="IlvC"/>
    <property type="match status" value="1"/>
</dbReference>
<dbReference type="InterPro" id="IPR008927">
    <property type="entry name" value="6-PGluconate_DH-like_C_sf"/>
</dbReference>
<dbReference type="InterPro" id="IPR013023">
    <property type="entry name" value="KARI"/>
</dbReference>
<dbReference type="InterPro" id="IPR000506">
    <property type="entry name" value="KARI_C"/>
</dbReference>
<dbReference type="InterPro" id="IPR013116">
    <property type="entry name" value="KARI_N"/>
</dbReference>
<dbReference type="InterPro" id="IPR014359">
    <property type="entry name" value="KARI_prok"/>
</dbReference>
<dbReference type="InterPro" id="IPR036291">
    <property type="entry name" value="NAD(P)-bd_dom_sf"/>
</dbReference>
<dbReference type="NCBIfam" id="TIGR00465">
    <property type="entry name" value="ilvC"/>
    <property type="match status" value="1"/>
</dbReference>
<dbReference type="NCBIfam" id="NF004017">
    <property type="entry name" value="PRK05479.1"/>
    <property type="match status" value="1"/>
</dbReference>
<dbReference type="NCBIfam" id="NF009940">
    <property type="entry name" value="PRK13403.1"/>
    <property type="match status" value="1"/>
</dbReference>
<dbReference type="PANTHER" id="PTHR21371">
    <property type="entry name" value="KETOL-ACID REDUCTOISOMERASE, MITOCHONDRIAL"/>
    <property type="match status" value="1"/>
</dbReference>
<dbReference type="PANTHER" id="PTHR21371:SF1">
    <property type="entry name" value="KETOL-ACID REDUCTOISOMERASE, MITOCHONDRIAL"/>
    <property type="match status" value="1"/>
</dbReference>
<dbReference type="Pfam" id="PF01450">
    <property type="entry name" value="KARI_C"/>
    <property type="match status" value="1"/>
</dbReference>
<dbReference type="Pfam" id="PF07991">
    <property type="entry name" value="KARI_N"/>
    <property type="match status" value="1"/>
</dbReference>
<dbReference type="PIRSF" id="PIRSF000116">
    <property type="entry name" value="IlvC_gammaproteo"/>
    <property type="match status" value="1"/>
</dbReference>
<dbReference type="SUPFAM" id="SSF48179">
    <property type="entry name" value="6-phosphogluconate dehydrogenase C-terminal domain-like"/>
    <property type="match status" value="1"/>
</dbReference>
<dbReference type="SUPFAM" id="SSF51735">
    <property type="entry name" value="NAD(P)-binding Rossmann-fold domains"/>
    <property type="match status" value="1"/>
</dbReference>
<dbReference type="PROSITE" id="PS51851">
    <property type="entry name" value="KARI_C"/>
    <property type="match status" value="1"/>
</dbReference>
<dbReference type="PROSITE" id="PS51850">
    <property type="entry name" value="KARI_N"/>
    <property type="match status" value="1"/>
</dbReference>
<organism>
    <name type="scientific">Pseudomonas putida (strain ATCC 47054 / DSM 6125 / CFBP 8728 / NCIMB 11950 / KT2440)</name>
    <dbReference type="NCBI Taxonomy" id="160488"/>
    <lineage>
        <taxon>Bacteria</taxon>
        <taxon>Pseudomonadati</taxon>
        <taxon>Pseudomonadota</taxon>
        <taxon>Gammaproteobacteria</taxon>
        <taxon>Pseudomonadales</taxon>
        <taxon>Pseudomonadaceae</taxon>
        <taxon>Pseudomonas</taxon>
    </lineage>
</organism>
<protein>
    <recommendedName>
        <fullName evidence="1">Ketol-acid reductoisomerase (NADP(+))</fullName>
        <shortName evidence="1">KARI</shortName>
        <ecNumber evidence="1">1.1.1.86</ecNumber>
    </recommendedName>
    <alternativeName>
        <fullName evidence="1">Acetohydroxy-acid isomeroreductase</fullName>
        <shortName evidence="1">AHIR</shortName>
    </alternativeName>
    <alternativeName>
        <fullName evidence="1">Alpha-keto-beta-hydroxylacyl reductoisomerase</fullName>
    </alternativeName>
    <alternativeName>
        <fullName evidence="1">Ketol-acid reductoisomerase type 1</fullName>
    </alternativeName>
    <alternativeName>
        <fullName evidence="1">Ketol-acid reductoisomerase type I</fullName>
    </alternativeName>
</protein>
<accession>Q88DZ0</accession>